<comment type="function">
    <text evidence="10 11">Plays a role in biomineralization; might regulate pH in the magnetosome.</text>
</comment>
<comment type="subcellular location">
    <subcellularLocation>
        <location evidence="3">Magnetosome membrane</location>
        <topology evidence="1">Multi-pass membrane protein</topology>
    </subcellularLocation>
</comment>
<comment type="induction">
    <text evidence="9">Part of the probable 17 gene mamAB operon.</text>
</comment>
<comment type="disruption phenotype">
    <text evidence="2 5 6">Weak magnetic response, very few, small magnetite-containing magnetosomes. Near wild-type localization of MamC (PubMed:24816605). Magnetosome vesicles are approximately wild-type in size, shape and chain-like alignment, only a few have crystals (PubMed:27286560). Deletion of approximately 80 kb of DNA, including this operon, leads to cells that are non-magnetic, lack internal membrane systems, grow poorly, have reduced mobility and take-up and accumulate iron poorly (PubMed:13129949).</text>
</comment>
<comment type="miscellaneous">
    <text evidence="9">This bacteria makes up to 60 cubo-octahedral magnetosomes of about 45 nm in diameter which contain membrane-bound crystals of magnetite (Fe(3)O(4)).</text>
</comment>
<comment type="miscellaneous">
    <text evidence="4">Expression of just the minimal mamAB gene cluster (MGMSRv2__2365 to MGMSRv2__2381), including this gene, is sufficient to form a minimal magnetosome chain with small magnetite particles.</text>
</comment>
<comment type="similarity">
    <text evidence="8">Belongs to the arsenite-antimonite (ArsB) efflux (TC 2.A.45) family.</text>
</comment>
<protein>
    <recommendedName>
        <fullName evidence="8">Magnetosome protein MamN</fullName>
    </recommendedName>
    <alternativeName>
        <fullName evidence="8">Putative ion transporter MamN</fullName>
    </alternativeName>
</protein>
<dbReference type="EMBL" id="BX571797">
    <property type="protein sequence ID" value="CAE12037.1"/>
    <property type="molecule type" value="Genomic_DNA"/>
</dbReference>
<dbReference type="EMBL" id="AM085146">
    <property type="protein sequence ID" value="CAJ30121.1"/>
    <property type="molecule type" value="Genomic_DNA"/>
</dbReference>
<dbReference type="EMBL" id="CU459003">
    <property type="protein sequence ID" value="CAM78028.1"/>
    <property type="molecule type" value="Genomic_DNA"/>
</dbReference>
<dbReference type="EMBL" id="HG794546">
    <property type="protein sequence ID" value="CDK99589.1"/>
    <property type="molecule type" value="Genomic_DNA"/>
</dbReference>
<dbReference type="RefSeq" id="WP_024080585.1">
    <property type="nucleotide sequence ID" value="NZ_CP027526.1"/>
</dbReference>
<dbReference type="SMR" id="Q6NE56"/>
<dbReference type="STRING" id="1430440.MGMSRv2__2374"/>
<dbReference type="TCDB" id="2.A.45.2.3">
    <property type="family name" value="the arsenite-antimonite (arsb) efflux family"/>
</dbReference>
<dbReference type="KEGG" id="mgry:MSR1_03410"/>
<dbReference type="KEGG" id="mgy:MGMSRv2__2374"/>
<dbReference type="eggNOG" id="COG1055">
    <property type="taxonomic scope" value="Bacteria"/>
</dbReference>
<dbReference type="HOGENOM" id="CLU_011920_4_0_5"/>
<dbReference type="OrthoDB" id="9809303at2"/>
<dbReference type="Proteomes" id="UP000018922">
    <property type="component" value="Chromosome I"/>
</dbReference>
<dbReference type="GO" id="GO:0110146">
    <property type="term" value="C:magnetosome membrane"/>
    <property type="evidence" value="ECO:0000314"/>
    <property type="project" value="UniProtKB"/>
</dbReference>
<dbReference type="GO" id="GO:0006811">
    <property type="term" value="P:monoatomic ion transport"/>
    <property type="evidence" value="ECO:0007669"/>
    <property type="project" value="UniProtKB-KW"/>
</dbReference>
<dbReference type="GO" id="GO:0055085">
    <property type="term" value="P:transmembrane transport"/>
    <property type="evidence" value="ECO:0007669"/>
    <property type="project" value="InterPro"/>
</dbReference>
<dbReference type="CDD" id="cd01116">
    <property type="entry name" value="P_permease"/>
    <property type="match status" value="1"/>
</dbReference>
<dbReference type="InterPro" id="IPR004680">
    <property type="entry name" value="Cit_transptr-like_dom"/>
</dbReference>
<dbReference type="InterPro" id="IPR051475">
    <property type="entry name" value="Diverse_Ion_Transporter"/>
</dbReference>
<dbReference type="NCBIfam" id="NF040989">
    <property type="entry name" value="MamN"/>
    <property type="match status" value="1"/>
</dbReference>
<dbReference type="PANTHER" id="PTHR43568">
    <property type="entry name" value="P PROTEIN"/>
    <property type="match status" value="1"/>
</dbReference>
<dbReference type="PANTHER" id="PTHR43568:SF1">
    <property type="entry name" value="P PROTEIN"/>
    <property type="match status" value="1"/>
</dbReference>
<dbReference type="Pfam" id="PF03600">
    <property type="entry name" value="CitMHS"/>
    <property type="match status" value="1"/>
</dbReference>
<name>MAMN_MAGGM</name>
<keyword id="KW-0091">Biomineralization</keyword>
<keyword id="KW-0406">Ion transport</keyword>
<keyword id="KW-1281">Magnetosome</keyword>
<keyword id="KW-0472">Membrane</keyword>
<keyword id="KW-1185">Reference proteome</keyword>
<keyword id="KW-0812">Transmembrane</keyword>
<keyword id="KW-1133">Transmembrane helix</keyword>
<keyword id="KW-0813">Transport</keyword>
<reference key="1">
    <citation type="journal article" date="2003" name="J. Bacteriol.">
        <title>Characterization of a spontaneous nonmagnetic mutant of Magnetospirillum gryphiswaldense reveals a large deletion comprising a putative magnetosome island.</title>
        <authorList>
            <person name="Schuebbe S."/>
            <person name="Kube M."/>
            <person name="Scheffel A."/>
            <person name="Wawer C."/>
            <person name="Heyen U."/>
            <person name="Meyerdierks A."/>
            <person name="Madkour M.H."/>
            <person name="Mayer F."/>
            <person name="Reinhardt R."/>
            <person name="Schueler D."/>
        </authorList>
    </citation>
    <scope>NUCLEOTIDE SEQUENCE [GENOMIC DNA]</scope>
    <scope>PROBABLE OPERON</scope>
    <scope>DISRUPTION PHENOTYPE</scope>
    <source>
        <strain>DSM 6361 / JCM 21280 / NBRC 15271 / MSR-1</strain>
    </source>
</reference>
<reference key="2">
    <citation type="journal article" date="2005" name="J. Bacteriol.">
        <title>A hypervariable 130-kilobase genomic region of Magnetospirillum gryphiswaldense comprises a magnetosome island which undergoes frequent rearrangements during stationary growth.</title>
        <authorList>
            <person name="Ullrich S."/>
            <person name="Kube M."/>
            <person name="Schuebbe S."/>
            <person name="Reinhardt R."/>
            <person name="Schueler D."/>
        </authorList>
    </citation>
    <scope>NUCLEOTIDE SEQUENCE [GENOMIC DNA]</scope>
    <source>
        <strain>DSM 6361 / JCM 21280 / NBRC 15271 / MSR-1</strain>
    </source>
</reference>
<reference key="3">
    <citation type="journal article" date="2007" name="J. Bacteriol.">
        <title>Comparative genome analysis of four magnetotactic bacteria reveals a complex set of group-specific genes implicated in magnetosome biomineralization and function.</title>
        <authorList>
            <person name="Richter M."/>
            <person name="Kube M."/>
            <person name="Bazylinski D.A."/>
            <person name="Lombardot T."/>
            <person name="Gloeckner F.O."/>
            <person name="Reinhardt R."/>
            <person name="Schueler D."/>
        </authorList>
    </citation>
    <scope>NUCLEOTIDE SEQUENCE [LARGE SCALE GENOMIC DNA]</scope>
    <source>
        <strain>DSM 6361 / JCM 21280 / NBRC 15271 / MSR-1</strain>
    </source>
</reference>
<reference key="4">
    <citation type="journal article" date="2014" name="Genome Announc.">
        <title>Complete genome sequence of Magnetospirillum gryphiswaldense MSR-1.</title>
        <authorList>
            <person name="Wang X."/>
            <person name="Wang Q."/>
            <person name="Zhang W."/>
            <person name="Wang Y."/>
            <person name="Li L."/>
            <person name="Wen T."/>
            <person name="Zhang T."/>
            <person name="Zhang Y."/>
            <person name="Xu J."/>
            <person name="Hu J."/>
            <person name="Li S."/>
            <person name="Liu L."/>
            <person name="Liu J."/>
            <person name="Jiang W."/>
            <person name="Tian J."/>
            <person name="Li Y."/>
            <person name="Schuler D."/>
            <person name="Wang L."/>
            <person name="Li J."/>
        </authorList>
    </citation>
    <scope>NUCLEOTIDE SEQUENCE [LARGE SCALE GENOMIC DNA]</scope>
    <source>
        <strain>DSM 6361 / JCM 21280 / NBRC 15271 / MSR-1</strain>
    </source>
</reference>
<reference key="5">
    <citation type="journal article" date="2004" name="Appl. Environ. Microbiol.">
        <title>Biochemical and proteomic analysis of the magnetosome membrane in Magnetospirillum gryphiswaldense.</title>
        <authorList>
            <person name="Gruenberg K."/>
            <person name="Mueller E.C."/>
            <person name="Otto A."/>
            <person name="Reszka R."/>
            <person name="Linder D."/>
            <person name="Kube M."/>
            <person name="Reinhardt R."/>
            <person name="Schueler D."/>
        </authorList>
    </citation>
    <scope>SUBCELLULAR LOCATION</scope>
    <scope>IDENTIFICATION BY MASS SPECTROMETRY</scope>
    <source>
        <strain>DSM 6361 / JCM 21280 / NBRC 15271 / MSR-1</strain>
    </source>
</reference>
<reference key="6">
    <citation type="journal article" date="2014" name="J. Bacteriol.">
        <title>Genetic dissection of the mamAB and mms6 operons reveals a gene set essential for magnetosome biogenesis in Magnetospirillum gryphiswaldense.</title>
        <authorList>
            <person name="Lohsse A."/>
            <person name="Borg S."/>
            <person name="Raschdorf O."/>
            <person name="Kolinko I."/>
            <person name="Tompa E."/>
            <person name="Posfai M."/>
            <person name="Faivre D."/>
            <person name="Baumgartner J."/>
            <person name="Schueler D."/>
        </authorList>
    </citation>
    <scope>DISRUPTION PHENOTYPE</scope>
    <source>
        <strain>DSM 6361 / JCM 21280 / NBRC 15271 / MSR-1</strain>
    </source>
</reference>
<reference key="7">
    <citation type="journal article" date="2011" name="PLoS ONE">
        <title>Functional analysis of the magnetosome island in Magnetospirillum gryphiswaldense: the mamAB operon is sufficient for magnetite biomineralization.</title>
        <authorList>
            <person name="Lohsse A."/>
            <person name="Ullrich S."/>
            <person name="Katzmann E."/>
            <person name="Borg S."/>
            <person name="Wanner G."/>
            <person name="Richter M."/>
            <person name="Voigt B."/>
            <person name="Schweder T."/>
            <person name="Schueler D."/>
        </authorList>
    </citation>
    <scope>MINIMAL MAGNETOSOME ISLAND</scope>
    <source>
        <strain>DSM 6361 / JCM 21280 / NBRC 15271 / MSR-1</strain>
    </source>
</reference>
<reference key="8">
    <citation type="journal article" date="2016" name="PLoS Genet.">
        <title>Genetic and Ultrastructural Analysis Reveals the Key Players and Initial Steps of Bacterial Magnetosome Membrane Biogenesis.</title>
        <authorList>
            <person name="Raschdorf O."/>
            <person name="Forstner Y."/>
            <person name="Kolinko I."/>
            <person name="Uebe R."/>
            <person name="Plitzko J.M."/>
            <person name="Schueler D."/>
        </authorList>
    </citation>
    <scope>FUNCTION</scope>
    <scope>DISRUPTION PHENOTYPE</scope>
    <source>
        <strain>DSM 6361 / JCM 21280 / NBRC 15271 / MSR-1</strain>
    </source>
</reference>
<accession>Q6NE56</accession>
<accession>V6F2B1</accession>
<sequence length="437" mass="46180">MVGFITLAVFIATFAVIYRWAEGSHLAVLAGAAVLVVIGTISGTYTPRMAVQSIYFETLALIFGMAAISALLARSGVYAYLAAGTAELSQGQGRWILVMMALVTYGISLASNSLITVAVVVPVTLTVCFRTGIDPVPVIIAEIIAANLGGSSTMIGDFPNMILASAGKLHFNDFIGGMMPACLILLAVTFLFFEYRQGDWKKAEIPVDLAWVRGEQLRYSDIDHRLLRYGLIIFFITVIGLVLAGPLKVRPGWIAFVAGLTALALGRFKDEEFFSACGGSDILFFGGLFVMVGALTSVGILDWAVAWLEGVTAGHDRVRAILLMWMAAGVTIFVGGGTSAAVFAPVAATLRLDGDGQAAWWALALGIMAGSCAALSGATAGALAMNQYSGFVKRHPELASAAAAGLQFTHREYVRWGLPLMGIFLVLSTVYIAVLAG</sequence>
<evidence type="ECO:0000255" key="1"/>
<evidence type="ECO:0000269" key="2">
    <source>
    </source>
</evidence>
<evidence type="ECO:0000269" key="3">
    <source>
    </source>
</evidence>
<evidence type="ECO:0000269" key="4">
    <source>
    </source>
</evidence>
<evidence type="ECO:0000269" key="5">
    <source>
    </source>
</evidence>
<evidence type="ECO:0000269" key="6">
    <source>
    </source>
</evidence>
<evidence type="ECO:0000303" key="7">
    <source>
    </source>
</evidence>
<evidence type="ECO:0000305" key="8"/>
<evidence type="ECO:0000305" key="9">
    <source>
    </source>
</evidence>
<evidence type="ECO:0000305" key="10">
    <source>
    </source>
</evidence>
<evidence type="ECO:0000305" key="11">
    <source>
    </source>
</evidence>
<evidence type="ECO:0000312" key="12">
    <source>
        <dbReference type="EMBL" id="CDK99589.1"/>
    </source>
</evidence>
<organism>
    <name type="scientific">Magnetospirillum gryphiswaldense (strain DSM 6361 / JCM 21280 / NBRC 15271 / MSR-1)</name>
    <dbReference type="NCBI Taxonomy" id="431944"/>
    <lineage>
        <taxon>Bacteria</taxon>
        <taxon>Pseudomonadati</taxon>
        <taxon>Pseudomonadota</taxon>
        <taxon>Alphaproteobacteria</taxon>
        <taxon>Rhodospirillales</taxon>
        <taxon>Rhodospirillaceae</taxon>
        <taxon>Magnetospirillum</taxon>
    </lineage>
</organism>
<gene>
    <name evidence="7" type="primary">mamN</name>
    <name evidence="12" type="ordered locus">MGMSRv2__2374</name>
    <name type="ORF">mgI492</name>
    <name type="ORF">MGR_4096</name>
</gene>
<feature type="chain" id="PRO_0000447742" description="Magnetosome protein MamN">
    <location>
        <begin position="1"/>
        <end position="437"/>
    </location>
</feature>
<feature type="transmembrane region" description="Helical" evidence="1">
    <location>
        <begin position="26"/>
        <end position="46"/>
    </location>
</feature>
<feature type="transmembrane region" description="Helical" evidence="1">
    <location>
        <begin position="53"/>
        <end position="73"/>
    </location>
</feature>
<feature type="transmembrane region" description="Helical" evidence="1">
    <location>
        <begin position="95"/>
        <end position="115"/>
    </location>
</feature>
<feature type="transmembrane region" description="Helical" evidence="1">
    <location>
        <begin position="136"/>
        <end position="156"/>
    </location>
</feature>
<feature type="transmembrane region" description="Helical" evidence="1">
    <location>
        <begin position="174"/>
        <end position="194"/>
    </location>
</feature>
<feature type="transmembrane region" description="Helical" evidence="1">
    <location>
        <begin position="229"/>
        <end position="249"/>
    </location>
</feature>
<feature type="transmembrane region" description="Helical" evidence="1">
    <location>
        <begin position="252"/>
        <end position="268"/>
    </location>
</feature>
<feature type="transmembrane region" description="Helical" evidence="1">
    <location>
        <begin position="281"/>
        <end position="301"/>
    </location>
</feature>
<feature type="transmembrane region" description="Helical" evidence="1">
    <location>
        <begin position="320"/>
        <end position="340"/>
    </location>
</feature>
<feature type="transmembrane region" description="Helical" evidence="1">
    <location>
        <begin position="358"/>
        <end position="378"/>
    </location>
</feature>
<feature type="transmembrane region" description="Helical" evidence="1">
    <location>
        <begin position="416"/>
        <end position="436"/>
    </location>
</feature>
<proteinExistence type="evidence at protein level"/>